<gene>
    <name evidence="1" type="primary">hisA</name>
    <name type="ordered locus">CFF8240_1351</name>
</gene>
<reference key="1">
    <citation type="submission" date="2006-11" db="EMBL/GenBank/DDBJ databases">
        <title>Sequence of Campylobacter fetus subsp. fetus 82-40.</title>
        <authorList>
            <person name="Fouts D.E."/>
            <person name="Nelson K.E."/>
        </authorList>
    </citation>
    <scope>NUCLEOTIDE SEQUENCE [LARGE SCALE GENOMIC DNA]</scope>
    <source>
        <strain>82-40</strain>
    </source>
</reference>
<feature type="chain" id="PRO_0000290460" description="1-(5-phosphoribosyl)-5-[(5-phosphoribosylamino)methylideneamino] imidazole-4-carboxamide isomerase">
    <location>
        <begin position="1"/>
        <end position="236"/>
    </location>
</feature>
<feature type="active site" description="Proton acceptor" evidence="1">
    <location>
        <position position="8"/>
    </location>
</feature>
<feature type="active site" description="Proton donor" evidence="1">
    <location>
        <position position="127"/>
    </location>
</feature>
<keyword id="KW-0028">Amino-acid biosynthesis</keyword>
<keyword id="KW-0963">Cytoplasm</keyword>
<keyword id="KW-0368">Histidine biosynthesis</keyword>
<keyword id="KW-0413">Isomerase</keyword>
<name>HIS4_CAMFF</name>
<dbReference type="EC" id="5.3.1.16" evidence="1"/>
<dbReference type="EMBL" id="CP000487">
    <property type="protein sequence ID" value="ABK82855.1"/>
    <property type="molecule type" value="Genomic_DNA"/>
</dbReference>
<dbReference type="RefSeq" id="WP_011732167.1">
    <property type="nucleotide sequence ID" value="NC_008599.1"/>
</dbReference>
<dbReference type="SMR" id="A0RQL2"/>
<dbReference type="GeneID" id="61065168"/>
<dbReference type="KEGG" id="cff:CFF8240_1351"/>
<dbReference type="PATRIC" id="fig|360106.6.peg.1315"/>
<dbReference type="eggNOG" id="COG0106">
    <property type="taxonomic scope" value="Bacteria"/>
</dbReference>
<dbReference type="HOGENOM" id="CLU_048577_1_2_7"/>
<dbReference type="UniPathway" id="UPA00031">
    <property type="reaction ID" value="UER00009"/>
</dbReference>
<dbReference type="Proteomes" id="UP000000760">
    <property type="component" value="Chromosome"/>
</dbReference>
<dbReference type="GO" id="GO:0005737">
    <property type="term" value="C:cytoplasm"/>
    <property type="evidence" value="ECO:0007669"/>
    <property type="project" value="UniProtKB-SubCell"/>
</dbReference>
<dbReference type="GO" id="GO:0003949">
    <property type="term" value="F:1-(5-phosphoribosyl)-5-[(5-phosphoribosylamino)methylideneamino]imidazole-4-carboxamide isomerase activity"/>
    <property type="evidence" value="ECO:0007669"/>
    <property type="project" value="UniProtKB-UniRule"/>
</dbReference>
<dbReference type="GO" id="GO:0000105">
    <property type="term" value="P:L-histidine biosynthetic process"/>
    <property type="evidence" value="ECO:0007669"/>
    <property type="project" value="UniProtKB-UniRule"/>
</dbReference>
<dbReference type="GO" id="GO:0000162">
    <property type="term" value="P:L-tryptophan biosynthetic process"/>
    <property type="evidence" value="ECO:0007669"/>
    <property type="project" value="TreeGrafter"/>
</dbReference>
<dbReference type="CDD" id="cd04732">
    <property type="entry name" value="HisA"/>
    <property type="match status" value="1"/>
</dbReference>
<dbReference type="FunFam" id="3.20.20.70:FF:000009">
    <property type="entry name" value="1-(5-phosphoribosyl)-5-[(5-phosphoribosylamino)methylideneamino] imidazole-4-carboxamide isomerase"/>
    <property type="match status" value="1"/>
</dbReference>
<dbReference type="Gene3D" id="3.20.20.70">
    <property type="entry name" value="Aldolase class I"/>
    <property type="match status" value="1"/>
</dbReference>
<dbReference type="HAMAP" id="MF_01014">
    <property type="entry name" value="HisA"/>
    <property type="match status" value="1"/>
</dbReference>
<dbReference type="InterPro" id="IPR013785">
    <property type="entry name" value="Aldolase_TIM"/>
</dbReference>
<dbReference type="InterPro" id="IPR006062">
    <property type="entry name" value="His_biosynth"/>
</dbReference>
<dbReference type="InterPro" id="IPR006063">
    <property type="entry name" value="HisA_bact_arch"/>
</dbReference>
<dbReference type="InterPro" id="IPR044524">
    <property type="entry name" value="Isoase_HisA-like"/>
</dbReference>
<dbReference type="InterPro" id="IPR023016">
    <property type="entry name" value="Isoase_HisA-like_bact"/>
</dbReference>
<dbReference type="InterPro" id="IPR011060">
    <property type="entry name" value="RibuloseP-bd_barrel"/>
</dbReference>
<dbReference type="NCBIfam" id="TIGR00007">
    <property type="entry name" value="1-(5-phosphoribosyl)-5-[(5-phosphoribosylamino)methylideneamino]imidazole-4-carboxamide isomerase"/>
    <property type="match status" value="1"/>
</dbReference>
<dbReference type="PANTHER" id="PTHR43090">
    <property type="entry name" value="1-(5-PHOSPHORIBOSYL)-5-[(5-PHOSPHORIBOSYLAMINO)METHYLIDENEAMINO] IMIDAZOLE-4-CARBOXAMIDE ISOMERASE"/>
    <property type="match status" value="1"/>
</dbReference>
<dbReference type="PANTHER" id="PTHR43090:SF2">
    <property type="entry name" value="1-(5-PHOSPHORIBOSYL)-5-[(5-PHOSPHORIBOSYLAMINO)METHYLIDENEAMINO] IMIDAZOLE-4-CARBOXAMIDE ISOMERASE"/>
    <property type="match status" value="1"/>
</dbReference>
<dbReference type="Pfam" id="PF00977">
    <property type="entry name" value="His_biosynth"/>
    <property type="match status" value="1"/>
</dbReference>
<dbReference type="SUPFAM" id="SSF51366">
    <property type="entry name" value="Ribulose-phoshate binding barrel"/>
    <property type="match status" value="1"/>
</dbReference>
<protein>
    <recommendedName>
        <fullName evidence="1">1-(5-phosphoribosyl)-5-[(5-phosphoribosylamino)methylideneamino] imidazole-4-carboxamide isomerase</fullName>
        <ecNumber evidence="1">5.3.1.16</ecNumber>
    </recommendedName>
    <alternativeName>
        <fullName evidence="1">Phosphoribosylformimino-5-aminoimidazole carboxamide ribotide isomerase</fullName>
    </alternativeName>
</protein>
<organism>
    <name type="scientific">Campylobacter fetus subsp. fetus (strain 82-40)</name>
    <dbReference type="NCBI Taxonomy" id="360106"/>
    <lineage>
        <taxon>Bacteria</taxon>
        <taxon>Pseudomonadati</taxon>
        <taxon>Campylobacterota</taxon>
        <taxon>Epsilonproteobacteria</taxon>
        <taxon>Campylobacterales</taxon>
        <taxon>Campylobacteraceae</taxon>
        <taxon>Campylobacter</taxon>
    </lineage>
</organism>
<evidence type="ECO:0000255" key="1">
    <source>
        <dbReference type="HAMAP-Rule" id="MF_01014"/>
    </source>
</evidence>
<comment type="catalytic activity">
    <reaction evidence="1">
        <text>1-(5-phospho-beta-D-ribosyl)-5-[(5-phospho-beta-D-ribosylamino)methylideneamino]imidazole-4-carboxamide = 5-[(5-phospho-1-deoxy-D-ribulos-1-ylimino)methylamino]-1-(5-phospho-beta-D-ribosyl)imidazole-4-carboxamide</text>
        <dbReference type="Rhea" id="RHEA:15469"/>
        <dbReference type="ChEBI" id="CHEBI:58435"/>
        <dbReference type="ChEBI" id="CHEBI:58525"/>
        <dbReference type="EC" id="5.3.1.16"/>
    </reaction>
</comment>
<comment type="pathway">
    <text evidence="1">Amino-acid biosynthesis; L-histidine biosynthesis; L-histidine from 5-phospho-alpha-D-ribose 1-diphosphate: step 4/9.</text>
</comment>
<comment type="subcellular location">
    <subcellularLocation>
        <location evidence="1">Cytoplasm</location>
    </subcellularLocation>
</comment>
<comment type="similarity">
    <text evidence="1">Belongs to the HisA/HisF family.</text>
</comment>
<accession>A0RQL2</accession>
<sequence length="236" mass="25381">MEIIPAIDLKQSKAVRLTKGDMQTAKIYSDKPWELAKEFEDLGAKWLHIVDLDGAFAGDAINLKTIEKIVSTTNLQVEVGGGIRTKERIKSYLNSGVSRIILGSIALKNPEFVKEVAKNYRVVVGIDAIDGFVAIEGWANVSKMQASNLAKLYADAGVEAIIATDISRDGMLNGVNVEFSASIAKASGIDTIASGGVKDINDIKCLKLNGNIAGVIVGKAYYEGKLDLKEAFKSNF</sequence>
<proteinExistence type="inferred from homology"/>